<organism>
    <name type="scientific">Mus musculus</name>
    <name type="common">Mouse</name>
    <dbReference type="NCBI Taxonomy" id="10090"/>
    <lineage>
        <taxon>Eukaryota</taxon>
        <taxon>Metazoa</taxon>
        <taxon>Chordata</taxon>
        <taxon>Craniata</taxon>
        <taxon>Vertebrata</taxon>
        <taxon>Euteleostomi</taxon>
        <taxon>Mammalia</taxon>
        <taxon>Eutheria</taxon>
        <taxon>Euarchontoglires</taxon>
        <taxon>Glires</taxon>
        <taxon>Rodentia</taxon>
        <taxon>Myomorpha</taxon>
        <taxon>Muroidea</taxon>
        <taxon>Muridae</taxon>
        <taxon>Murinae</taxon>
        <taxon>Mus</taxon>
        <taxon>Mus</taxon>
    </lineage>
</organism>
<sequence length="968" mass="106909">MDATLTAREIRERFINFFRRNEHTYVHSSATIPLDDPTLLFANAGMNQFKPIFLNTIDPSHPMAKLSRAANTQKCIRAGGKHNDLDDVGKDVYHHTFFEMLGSWSFGDYFKELACKMALELLTQEFGIPVERLYVTYFGGDEAAGLEPDLECRQIWQNLGLDEARILPGNMKDNFWEMGDTGPCGPCSEIHYDRIGGRDAAHLVNQDDPNVLEIWNLVFIQYNRESDGVLKPLPKKSIDTGMGLERLVSVLQNKMSNYDTDLFMPYFEAIQKGTGARPYTGKVGAEDADGIDMAYRVLADHARTITVALADGGRPDNTGRGYVLRRILRRAVRYSHEKLNASRGFFATLVDVVVQSLGDAFPELKKDPEMVKDIINEEEVQFLKTLSRGRRILDRKIQSLGDCKTIPGDTAWLLYDTYGFPVDLTGLIAEEKGLVVDMNGFEEERRLAQLKSQGKGAGDEDLIMLDIYAIEELRAKGLEATDDSPKYNYQSDSSGSYVFECTVATVLALRREKMFVDEVVTGQECGVVLDKTCFYAEQGGQIYDEGYLVKVDDSSEDKTEFTVKNAQVRGGYVLHIGTIYGNLKVGDQVRLFIDEPRRRPVMSNHTATHILNFALRSVLGEADQKGSLVAPDRLRFDFTAKGAMSTQQIKKAEEIVNGMIEAAKPVYTQDCPLAAAKAIQGLRAVFDETYPDPVRVVSIGVPVSELLDDPCGPAGSLTSVEFCGGTHLRNSSHAGAFVIVTEEAIAKGIRRIVAVTGAEAQKALRKSETLKKSLSAMEAKVKAQTAPNKDVQREIADLGEALATAVIPQWQKDEQRETLKSLKKVMDDLDRASKADVQKRVLEKTKQLIDSNPNQPLVILEMESGASAKALNEALKLFKTHSPQTSAMLFTVDNEAGKITCLCQVPQNAANRGLKASEWVQQVSGLMDGKGGGKDMSAQATGKNVGCLQEALQLATSFAQLRLGDVKN</sequence>
<dbReference type="EC" id="6.1.1.7" evidence="2 7"/>
<dbReference type="EC" id="6.-.-.-" evidence="2"/>
<dbReference type="EMBL" id="AK044451">
    <property type="protein sequence ID" value="BAC31927.1"/>
    <property type="molecule type" value="mRNA"/>
</dbReference>
<dbReference type="EMBL" id="AK085725">
    <property type="protein sequence ID" value="BAC39520.1"/>
    <property type="molecule type" value="mRNA"/>
</dbReference>
<dbReference type="EMBL" id="BC033273">
    <property type="protein sequence ID" value="AAH33273.1"/>
    <property type="molecule type" value="mRNA"/>
</dbReference>
<dbReference type="CCDS" id="CCDS40478.1"/>
<dbReference type="RefSeq" id="NP_666329.2">
    <property type="nucleotide sequence ID" value="NM_146217.4"/>
</dbReference>
<dbReference type="RefSeq" id="XP_006530984.1">
    <property type="nucleotide sequence ID" value="XM_006530921.2"/>
</dbReference>
<dbReference type="RefSeq" id="XP_006530985.1">
    <property type="nucleotide sequence ID" value="XM_006530922.2"/>
</dbReference>
<dbReference type="RefSeq" id="XP_006530987.1">
    <property type="nucleotide sequence ID" value="XM_006530924.2"/>
</dbReference>
<dbReference type="RefSeq" id="XP_017168237.1">
    <property type="nucleotide sequence ID" value="XM_017312748.1"/>
</dbReference>
<dbReference type="SMR" id="Q8BGQ7"/>
<dbReference type="BioGRID" id="231572">
    <property type="interactions" value="31"/>
</dbReference>
<dbReference type="FunCoup" id="Q8BGQ7">
    <property type="interactions" value="3117"/>
</dbReference>
<dbReference type="IntAct" id="Q8BGQ7">
    <property type="interactions" value="5"/>
</dbReference>
<dbReference type="STRING" id="10090.ENSMUSP00000034441"/>
<dbReference type="GlyGen" id="Q8BGQ7">
    <property type="glycosylation" value="2 sites, 1 N-linked glycan (1 site), 1 O-linked glycan (1 site)"/>
</dbReference>
<dbReference type="iPTMnet" id="Q8BGQ7"/>
<dbReference type="MetOSite" id="Q8BGQ7"/>
<dbReference type="PhosphoSitePlus" id="Q8BGQ7"/>
<dbReference type="SwissPalm" id="Q8BGQ7"/>
<dbReference type="jPOST" id="Q8BGQ7"/>
<dbReference type="PaxDb" id="10090-ENSMUSP00000034441"/>
<dbReference type="PeptideAtlas" id="Q8BGQ7"/>
<dbReference type="ProteomicsDB" id="254614"/>
<dbReference type="Pumba" id="Q8BGQ7"/>
<dbReference type="Antibodypedia" id="29958">
    <property type="antibodies" value="233 antibodies from 29 providers"/>
</dbReference>
<dbReference type="DNASU" id="234734"/>
<dbReference type="Ensembl" id="ENSMUST00000034441.8">
    <property type="protein sequence ID" value="ENSMUSP00000034441.8"/>
    <property type="gene ID" value="ENSMUSG00000031960.15"/>
</dbReference>
<dbReference type="GeneID" id="234734"/>
<dbReference type="KEGG" id="mmu:234734"/>
<dbReference type="UCSC" id="uc009nlo.2">
    <property type="organism name" value="mouse"/>
</dbReference>
<dbReference type="AGR" id="MGI:2384560"/>
<dbReference type="CTD" id="16"/>
<dbReference type="MGI" id="MGI:2384560">
    <property type="gene designation" value="Aars1"/>
</dbReference>
<dbReference type="VEuPathDB" id="HostDB:ENSMUSG00000031960"/>
<dbReference type="eggNOG" id="KOG0188">
    <property type="taxonomic scope" value="Eukaryota"/>
</dbReference>
<dbReference type="GeneTree" id="ENSGT00940000157335"/>
<dbReference type="HOGENOM" id="CLU_004485_5_0_1"/>
<dbReference type="InParanoid" id="Q8BGQ7"/>
<dbReference type="OMA" id="NKKDNFW"/>
<dbReference type="OrthoDB" id="2423964at2759"/>
<dbReference type="PhylomeDB" id="Q8BGQ7"/>
<dbReference type="TreeFam" id="TF300737"/>
<dbReference type="BioGRID-ORCS" id="234734">
    <property type="hits" value="24 hits in 78 CRISPR screens"/>
</dbReference>
<dbReference type="ChiTaRS" id="Aars">
    <property type="organism name" value="mouse"/>
</dbReference>
<dbReference type="PRO" id="PR:Q8BGQ7"/>
<dbReference type="Proteomes" id="UP000000589">
    <property type="component" value="Chromosome 8"/>
</dbReference>
<dbReference type="RNAct" id="Q8BGQ7">
    <property type="molecule type" value="protein"/>
</dbReference>
<dbReference type="Bgee" id="ENSMUSG00000031960">
    <property type="expression patterns" value="Expressed in vault of skull and 264 other cell types or tissues"/>
</dbReference>
<dbReference type="ExpressionAtlas" id="Q8BGQ7">
    <property type="expression patterns" value="baseline and differential"/>
</dbReference>
<dbReference type="GO" id="GO:0005737">
    <property type="term" value="C:cytoplasm"/>
    <property type="evidence" value="ECO:0000250"/>
    <property type="project" value="UniProtKB"/>
</dbReference>
<dbReference type="GO" id="GO:0005829">
    <property type="term" value="C:cytosol"/>
    <property type="evidence" value="ECO:0007669"/>
    <property type="project" value="Ensembl"/>
</dbReference>
<dbReference type="GO" id="GO:0005634">
    <property type="term" value="C:nucleus"/>
    <property type="evidence" value="ECO:0000250"/>
    <property type="project" value="UniProtKB"/>
</dbReference>
<dbReference type="GO" id="GO:0004813">
    <property type="term" value="F:alanine-tRNA ligase activity"/>
    <property type="evidence" value="ECO:0000314"/>
    <property type="project" value="UniProtKB"/>
</dbReference>
<dbReference type="GO" id="GO:0016597">
    <property type="term" value="F:amino acid binding"/>
    <property type="evidence" value="ECO:0007669"/>
    <property type="project" value="Ensembl"/>
</dbReference>
<dbReference type="GO" id="GO:0002161">
    <property type="term" value="F:aminoacyl-tRNA deacylase activity"/>
    <property type="evidence" value="ECO:0000314"/>
    <property type="project" value="UniProtKB"/>
</dbReference>
<dbReference type="GO" id="GO:0005524">
    <property type="term" value="F:ATP binding"/>
    <property type="evidence" value="ECO:0007669"/>
    <property type="project" value="UniProtKB-UniRule"/>
</dbReference>
<dbReference type="GO" id="GO:0141207">
    <property type="term" value="F:peptide lactyltransferase (ATP-dependent) activity"/>
    <property type="evidence" value="ECO:0000250"/>
    <property type="project" value="UniProtKB"/>
</dbReference>
<dbReference type="GO" id="GO:0002196">
    <property type="term" value="F:Ser-tRNA(Ala) deacylase activity"/>
    <property type="evidence" value="ECO:0000314"/>
    <property type="project" value="UniProtKB"/>
</dbReference>
<dbReference type="GO" id="GO:0000049">
    <property type="term" value="F:tRNA binding"/>
    <property type="evidence" value="ECO:0007669"/>
    <property type="project" value="UniProtKB-KW"/>
</dbReference>
<dbReference type="GO" id="GO:0008270">
    <property type="term" value="F:zinc ion binding"/>
    <property type="evidence" value="ECO:0007669"/>
    <property type="project" value="UniProtKB-UniRule"/>
</dbReference>
<dbReference type="GO" id="GO:0006419">
    <property type="term" value="P:alanyl-tRNA aminoacylation"/>
    <property type="evidence" value="ECO:0000314"/>
    <property type="project" value="UniProtKB"/>
</dbReference>
<dbReference type="GO" id="GO:0021680">
    <property type="term" value="P:cerebellar Purkinje cell layer development"/>
    <property type="evidence" value="ECO:0000315"/>
    <property type="project" value="MGI"/>
</dbReference>
<dbReference type="GO" id="GO:0043524">
    <property type="term" value="P:negative regulation of neuron apoptotic process"/>
    <property type="evidence" value="ECO:0000315"/>
    <property type="project" value="MGI"/>
</dbReference>
<dbReference type="GO" id="GO:1901797">
    <property type="term" value="P:negative regulation of signal transduction by p53 class mediator"/>
    <property type="evidence" value="ECO:0000250"/>
    <property type="project" value="UniProtKB"/>
</dbReference>
<dbReference type="GO" id="GO:0050905">
    <property type="term" value="P:neuromuscular process"/>
    <property type="evidence" value="ECO:0000315"/>
    <property type="project" value="MGI"/>
</dbReference>
<dbReference type="GO" id="GO:0050885">
    <property type="term" value="P:neuromuscular process controlling balance"/>
    <property type="evidence" value="ECO:0000315"/>
    <property type="project" value="MGI"/>
</dbReference>
<dbReference type="GO" id="GO:0051402">
    <property type="term" value="P:neuron apoptotic process"/>
    <property type="evidence" value="ECO:0000315"/>
    <property type="project" value="MGI"/>
</dbReference>
<dbReference type="GO" id="GO:0035332">
    <property type="term" value="P:positive regulation of hippo signaling"/>
    <property type="evidence" value="ECO:0000250"/>
    <property type="project" value="UniProtKB"/>
</dbReference>
<dbReference type="GO" id="GO:0140018">
    <property type="term" value="P:regulation of cytoplasmic translational fidelity"/>
    <property type="evidence" value="ECO:0000315"/>
    <property type="project" value="MGI"/>
</dbReference>
<dbReference type="GO" id="GO:0006400">
    <property type="term" value="P:tRNA modification"/>
    <property type="evidence" value="ECO:0000314"/>
    <property type="project" value="UniProtKB"/>
</dbReference>
<dbReference type="CDD" id="cd00673">
    <property type="entry name" value="AlaRS_core"/>
    <property type="match status" value="1"/>
</dbReference>
<dbReference type="FunFam" id="3.30.930.10:FF:000011">
    <property type="entry name" value="Alanine--tRNA ligase, cytoplasmic"/>
    <property type="match status" value="1"/>
</dbReference>
<dbReference type="FunFam" id="3.30.980.10:FF:000004">
    <property type="entry name" value="Alanine--tRNA ligase, cytoplasmic"/>
    <property type="match status" value="1"/>
</dbReference>
<dbReference type="FunFam" id="3.10.310.40:FF:000002">
    <property type="entry name" value="alanine--tRNA ligase, cytoplasmic"/>
    <property type="match status" value="1"/>
</dbReference>
<dbReference type="FunFam" id="2.40.30.130:FF:000026">
    <property type="entry name" value="Alanyl-tRNA synthetase"/>
    <property type="match status" value="1"/>
</dbReference>
<dbReference type="Gene3D" id="2.40.30.130">
    <property type="match status" value="1"/>
</dbReference>
<dbReference type="Gene3D" id="3.10.310.40">
    <property type="match status" value="1"/>
</dbReference>
<dbReference type="Gene3D" id="3.30.930.10">
    <property type="entry name" value="Bira Bifunctional Protein, Domain 2"/>
    <property type="match status" value="1"/>
</dbReference>
<dbReference type="Gene3D" id="3.30.980.10">
    <property type="entry name" value="Threonyl-trna Synthetase, Chain A, domain 2"/>
    <property type="match status" value="1"/>
</dbReference>
<dbReference type="HAMAP" id="MF_00036_B">
    <property type="entry name" value="Ala_tRNA_synth_B"/>
    <property type="match status" value="1"/>
</dbReference>
<dbReference type="InterPro" id="IPR045864">
    <property type="entry name" value="aa-tRNA-synth_II/BPL/LPL"/>
</dbReference>
<dbReference type="InterPro" id="IPR002318">
    <property type="entry name" value="Ala-tRNA-lgiase_IIc"/>
</dbReference>
<dbReference type="InterPro" id="IPR018162">
    <property type="entry name" value="Ala-tRNA-ligase_IIc_anticod-bd"/>
</dbReference>
<dbReference type="InterPro" id="IPR018165">
    <property type="entry name" value="Ala-tRNA-synth_IIc_core"/>
</dbReference>
<dbReference type="InterPro" id="IPR018164">
    <property type="entry name" value="Ala-tRNA-synth_IIc_N"/>
</dbReference>
<dbReference type="InterPro" id="IPR050058">
    <property type="entry name" value="Ala-tRNA_ligase"/>
</dbReference>
<dbReference type="InterPro" id="IPR023033">
    <property type="entry name" value="Ala_tRNA_ligase_euk/bac"/>
</dbReference>
<dbReference type="InterPro" id="IPR003156">
    <property type="entry name" value="DHHA1_dom"/>
</dbReference>
<dbReference type="InterPro" id="IPR018163">
    <property type="entry name" value="Thr/Ala-tRNA-synth_IIc_edit"/>
</dbReference>
<dbReference type="InterPro" id="IPR009000">
    <property type="entry name" value="Transl_B-barrel_sf"/>
</dbReference>
<dbReference type="InterPro" id="IPR012947">
    <property type="entry name" value="tRNA_SAD"/>
</dbReference>
<dbReference type="NCBIfam" id="TIGR00344">
    <property type="entry name" value="alaS"/>
    <property type="match status" value="1"/>
</dbReference>
<dbReference type="PANTHER" id="PTHR11777:SF36">
    <property type="entry name" value="ALANINE--TRNA LIGASE, CYTOPLASMIC"/>
    <property type="match status" value="1"/>
</dbReference>
<dbReference type="PANTHER" id="PTHR11777">
    <property type="entry name" value="ALANYL-TRNA SYNTHETASE"/>
    <property type="match status" value="1"/>
</dbReference>
<dbReference type="Pfam" id="PF02272">
    <property type="entry name" value="DHHA1"/>
    <property type="match status" value="1"/>
</dbReference>
<dbReference type="Pfam" id="PF01411">
    <property type="entry name" value="tRNA-synt_2c"/>
    <property type="match status" value="1"/>
</dbReference>
<dbReference type="Pfam" id="PF07973">
    <property type="entry name" value="tRNA_SAD"/>
    <property type="match status" value="1"/>
</dbReference>
<dbReference type="PRINTS" id="PR00980">
    <property type="entry name" value="TRNASYNTHALA"/>
</dbReference>
<dbReference type="SMART" id="SM00863">
    <property type="entry name" value="tRNA_SAD"/>
    <property type="match status" value="1"/>
</dbReference>
<dbReference type="SUPFAM" id="SSF55681">
    <property type="entry name" value="Class II aaRS and biotin synthetases"/>
    <property type="match status" value="1"/>
</dbReference>
<dbReference type="SUPFAM" id="SSF101353">
    <property type="entry name" value="Putative anticodon-binding domain of alanyl-tRNA synthetase (AlaRS)"/>
    <property type="match status" value="1"/>
</dbReference>
<dbReference type="SUPFAM" id="SSF55186">
    <property type="entry name" value="ThrRS/AlaRS common domain"/>
    <property type="match status" value="1"/>
</dbReference>
<dbReference type="SUPFAM" id="SSF50447">
    <property type="entry name" value="Translation proteins"/>
    <property type="match status" value="1"/>
</dbReference>
<dbReference type="PROSITE" id="PS50860">
    <property type="entry name" value="AA_TRNA_LIGASE_II_ALA"/>
    <property type="match status" value="1"/>
</dbReference>
<protein>
    <recommendedName>
        <fullName evidence="2">Alanine--tRNA ligase, cytoplasmic</fullName>
        <ecNumber evidence="2 7">6.1.1.7</ecNumber>
    </recommendedName>
    <alternativeName>
        <fullName evidence="2">Alanyl-tRNA synthetase</fullName>
        <shortName evidence="2">AlaRS</shortName>
    </alternativeName>
    <alternativeName>
        <fullName evidence="11">Protein lactyltransferase AARS1</fullName>
        <ecNumber evidence="2">6.-.-.-</ecNumber>
    </alternativeName>
    <alternativeName>
        <fullName evidence="10">Protein sticky</fullName>
        <shortName evidence="10">Sti</shortName>
    </alternativeName>
</protein>
<reference key="1">
    <citation type="journal article" date="2005" name="Science">
        <title>The transcriptional landscape of the mammalian genome.</title>
        <authorList>
            <person name="Carninci P."/>
            <person name="Kasukawa T."/>
            <person name="Katayama S."/>
            <person name="Gough J."/>
            <person name="Frith M.C."/>
            <person name="Maeda N."/>
            <person name="Oyama R."/>
            <person name="Ravasi T."/>
            <person name="Lenhard B."/>
            <person name="Wells C."/>
            <person name="Kodzius R."/>
            <person name="Shimokawa K."/>
            <person name="Bajic V.B."/>
            <person name="Brenner S.E."/>
            <person name="Batalov S."/>
            <person name="Forrest A.R."/>
            <person name="Zavolan M."/>
            <person name="Davis M.J."/>
            <person name="Wilming L.G."/>
            <person name="Aidinis V."/>
            <person name="Allen J.E."/>
            <person name="Ambesi-Impiombato A."/>
            <person name="Apweiler R."/>
            <person name="Aturaliya R.N."/>
            <person name="Bailey T.L."/>
            <person name="Bansal M."/>
            <person name="Baxter L."/>
            <person name="Beisel K.W."/>
            <person name="Bersano T."/>
            <person name="Bono H."/>
            <person name="Chalk A.M."/>
            <person name="Chiu K.P."/>
            <person name="Choudhary V."/>
            <person name="Christoffels A."/>
            <person name="Clutterbuck D.R."/>
            <person name="Crowe M.L."/>
            <person name="Dalla E."/>
            <person name="Dalrymple B.P."/>
            <person name="de Bono B."/>
            <person name="Della Gatta G."/>
            <person name="di Bernardo D."/>
            <person name="Down T."/>
            <person name="Engstrom P."/>
            <person name="Fagiolini M."/>
            <person name="Faulkner G."/>
            <person name="Fletcher C.F."/>
            <person name="Fukushima T."/>
            <person name="Furuno M."/>
            <person name="Futaki S."/>
            <person name="Gariboldi M."/>
            <person name="Georgii-Hemming P."/>
            <person name="Gingeras T.R."/>
            <person name="Gojobori T."/>
            <person name="Green R.E."/>
            <person name="Gustincich S."/>
            <person name="Harbers M."/>
            <person name="Hayashi Y."/>
            <person name="Hensch T.K."/>
            <person name="Hirokawa N."/>
            <person name="Hill D."/>
            <person name="Huminiecki L."/>
            <person name="Iacono M."/>
            <person name="Ikeo K."/>
            <person name="Iwama A."/>
            <person name="Ishikawa T."/>
            <person name="Jakt M."/>
            <person name="Kanapin A."/>
            <person name="Katoh M."/>
            <person name="Kawasawa Y."/>
            <person name="Kelso J."/>
            <person name="Kitamura H."/>
            <person name="Kitano H."/>
            <person name="Kollias G."/>
            <person name="Krishnan S.P."/>
            <person name="Kruger A."/>
            <person name="Kummerfeld S.K."/>
            <person name="Kurochkin I.V."/>
            <person name="Lareau L.F."/>
            <person name="Lazarevic D."/>
            <person name="Lipovich L."/>
            <person name="Liu J."/>
            <person name="Liuni S."/>
            <person name="McWilliam S."/>
            <person name="Madan Babu M."/>
            <person name="Madera M."/>
            <person name="Marchionni L."/>
            <person name="Matsuda H."/>
            <person name="Matsuzawa S."/>
            <person name="Miki H."/>
            <person name="Mignone F."/>
            <person name="Miyake S."/>
            <person name="Morris K."/>
            <person name="Mottagui-Tabar S."/>
            <person name="Mulder N."/>
            <person name="Nakano N."/>
            <person name="Nakauchi H."/>
            <person name="Ng P."/>
            <person name="Nilsson R."/>
            <person name="Nishiguchi S."/>
            <person name="Nishikawa S."/>
            <person name="Nori F."/>
            <person name="Ohara O."/>
            <person name="Okazaki Y."/>
            <person name="Orlando V."/>
            <person name="Pang K.C."/>
            <person name="Pavan W.J."/>
            <person name="Pavesi G."/>
            <person name="Pesole G."/>
            <person name="Petrovsky N."/>
            <person name="Piazza S."/>
            <person name="Reed J."/>
            <person name="Reid J.F."/>
            <person name="Ring B.Z."/>
            <person name="Ringwald M."/>
            <person name="Rost B."/>
            <person name="Ruan Y."/>
            <person name="Salzberg S.L."/>
            <person name="Sandelin A."/>
            <person name="Schneider C."/>
            <person name="Schoenbach C."/>
            <person name="Sekiguchi K."/>
            <person name="Semple C.A."/>
            <person name="Seno S."/>
            <person name="Sessa L."/>
            <person name="Sheng Y."/>
            <person name="Shibata Y."/>
            <person name="Shimada H."/>
            <person name="Shimada K."/>
            <person name="Silva D."/>
            <person name="Sinclair B."/>
            <person name="Sperling S."/>
            <person name="Stupka E."/>
            <person name="Sugiura K."/>
            <person name="Sultana R."/>
            <person name="Takenaka Y."/>
            <person name="Taki K."/>
            <person name="Tammoja K."/>
            <person name="Tan S.L."/>
            <person name="Tang S."/>
            <person name="Taylor M.S."/>
            <person name="Tegner J."/>
            <person name="Teichmann S.A."/>
            <person name="Ueda H.R."/>
            <person name="van Nimwegen E."/>
            <person name="Verardo R."/>
            <person name="Wei C.L."/>
            <person name="Yagi K."/>
            <person name="Yamanishi H."/>
            <person name="Zabarovsky E."/>
            <person name="Zhu S."/>
            <person name="Zimmer A."/>
            <person name="Hide W."/>
            <person name="Bult C."/>
            <person name="Grimmond S.M."/>
            <person name="Teasdale R.D."/>
            <person name="Liu E.T."/>
            <person name="Brusic V."/>
            <person name="Quackenbush J."/>
            <person name="Wahlestedt C."/>
            <person name="Mattick J.S."/>
            <person name="Hume D.A."/>
            <person name="Kai C."/>
            <person name="Sasaki D."/>
            <person name="Tomaru Y."/>
            <person name="Fukuda S."/>
            <person name="Kanamori-Katayama M."/>
            <person name="Suzuki M."/>
            <person name="Aoki J."/>
            <person name="Arakawa T."/>
            <person name="Iida J."/>
            <person name="Imamura K."/>
            <person name="Itoh M."/>
            <person name="Kato T."/>
            <person name="Kawaji H."/>
            <person name="Kawagashira N."/>
            <person name="Kawashima T."/>
            <person name="Kojima M."/>
            <person name="Kondo S."/>
            <person name="Konno H."/>
            <person name="Nakano K."/>
            <person name="Ninomiya N."/>
            <person name="Nishio T."/>
            <person name="Okada M."/>
            <person name="Plessy C."/>
            <person name="Shibata K."/>
            <person name="Shiraki T."/>
            <person name="Suzuki S."/>
            <person name="Tagami M."/>
            <person name="Waki K."/>
            <person name="Watahiki A."/>
            <person name="Okamura-Oho Y."/>
            <person name="Suzuki H."/>
            <person name="Kawai J."/>
            <person name="Hayashizaki Y."/>
        </authorList>
    </citation>
    <scope>NUCLEOTIDE SEQUENCE [LARGE SCALE MRNA]</scope>
    <source>
        <strain>C57BL/6J</strain>
        <tissue>Mammary gland</tissue>
        <tissue>Retina</tissue>
    </source>
</reference>
<reference key="2">
    <citation type="journal article" date="2004" name="Genome Res.">
        <title>The status, quality, and expansion of the NIH full-length cDNA project: the Mammalian Gene Collection (MGC).</title>
        <authorList>
            <consortium name="The MGC Project Team"/>
        </authorList>
    </citation>
    <scope>NUCLEOTIDE SEQUENCE [LARGE SCALE MRNA]</scope>
    <source>
        <strain>FVB/N</strain>
        <tissue>Liver</tissue>
    </source>
</reference>
<reference key="3">
    <citation type="journal article" date="2005" name="Biochem. Biophys. Res. Commun.">
        <title>Proteomic identification of proteins conjugated to ISG15 in mouse and human cells.</title>
        <authorList>
            <person name="Giannakopoulos N.V."/>
            <person name="Luo J.K."/>
            <person name="Papov V."/>
            <person name="Zou W."/>
            <person name="Lenschow D.J."/>
            <person name="Jacobs B.S."/>
            <person name="Borden E.C."/>
            <person name="Li J."/>
            <person name="Virgin H.W."/>
            <person name="Zhang D.E."/>
        </authorList>
    </citation>
    <scope>ISGYLATION</scope>
</reference>
<reference key="4">
    <citation type="journal article" date="2006" name="Nature">
        <title>Editing-defective tRNA synthetase causes protein misfolding and neurodegeneration.</title>
        <authorList>
            <person name="Lee J.W."/>
            <person name="Beebe K."/>
            <person name="Nangle L.A."/>
            <person name="Jang J."/>
            <person name="Longo-Guess C.M."/>
            <person name="Cook S.A."/>
            <person name="Davisson M.T."/>
            <person name="Sundberg J.P."/>
            <person name="Schimmel P."/>
            <person name="Ackerman S.L."/>
        </authorList>
    </citation>
    <scope>FUNCTION</scope>
    <scope>INVOLVEMENT IN STI</scope>
    <scope>VARIANT STI GLU-734</scope>
    <scope>CHARACTERIZATION OF VARIANT STI GLU-734</scope>
</reference>
<reference key="5">
    <citation type="journal article" date="2009" name="Nature">
        <title>Paradox of mistranslation of serine for alanine caused by AlaRS recognition dilemma.</title>
        <authorList>
            <person name="Guo M."/>
            <person name="Chong Y.E."/>
            <person name="Shapiro R."/>
            <person name="Beebe K."/>
            <person name="Yang X.L."/>
            <person name="Schimmel P."/>
        </authorList>
    </citation>
    <scope>FUNCTION IN EDITING ACTIVITY ON MISCHARGED TRNA(ALA)</scope>
</reference>
<reference key="6">
    <citation type="journal article" date="2010" name="Cell">
        <title>A tissue-specific atlas of mouse protein phosphorylation and expression.</title>
        <authorList>
            <person name="Huttlin E.L."/>
            <person name="Jedrychowski M.P."/>
            <person name="Elias J.E."/>
            <person name="Goswami T."/>
            <person name="Rad R."/>
            <person name="Beausoleil S.A."/>
            <person name="Villen J."/>
            <person name="Haas W."/>
            <person name="Sowa M.E."/>
            <person name="Gygi S.P."/>
        </authorList>
    </citation>
    <scope>IDENTIFICATION BY MASS SPECTROMETRY [LARGE SCALE ANALYSIS]</scope>
    <source>
        <tissue>Brain</tissue>
        <tissue>Brown adipose tissue</tissue>
        <tissue>Heart</tissue>
        <tissue>Kidney</tissue>
        <tissue>Liver</tissue>
        <tissue>Lung</tissue>
        <tissue>Pancreas</tissue>
        <tissue>Spleen</tissue>
        <tissue>Testis</tissue>
    </source>
</reference>
<reference key="7">
    <citation type="journal article" date="2014" name="Proc. Natl. Acad. Sci. U.S.A.">
        <title>Deficiencies in tRNA synthetase editing activity cause cardioproteinopathy.</title>
        <authorList>
            <person name="Liu Y."/>
            <person name="Satz J.S."/>
            <person name="Vo M.N."/>
            <person name="Nangle L.A."/>
            <person name="Schimmel P."/>
            <person name="Ackerman S.L."/>
        </authorList>
    </citation>
    <scope>FUNCTION</scope>
    <scope>CATALYTIC ACTIVITY</scope>
    <scope>MUTAGENESIS OF CYS-723</scope>
</reference>
<reference key="8">
    <citation type="journal article" date="2016" name="J. Am. Chem. Soc.">
        <title>Evolutionary Gain of Alanine Mischarging to Noncognate tRNAs with a G4:U69 Base Pair.</title>
        <authorList>
            <person name="Sun L."/>
            <person name="Gomes A.C."/>
            <person name="He W."/>
            <person name="Zhou H."/>
            <person name="Wang X."/>
            <person name="Pan D.W."/>
            <person name="Schimmel P."/>
            <person name="Pan T."/>
            <person name="Yang X.L."/>
        </authorList>
    </citation>
    <scope>CATALYTIC ACTIVITY</scope>
    <scope>FUNCTION</scope>
    <scope>MUTAGENESIS OF ALA-448</scope>
</reference>
<reference key="9">
    <citation type="journal article" date="2018" name="Nature">
        <title>ANKRD16 prevents neuron loss caused by an editing-defective tRNA synthetase.</title>
        <authorList>
            <person name="Vo M.N."/>
            <person name="Terrey M."/>
            <person name="Lee J.W."/>
            <person name="Roy B."/>
            <person name="Moresco J.J."/>
            <person name="Sun L."/>
            <person name="Fu H."/>
            <person name="Liu Q."/>
            <person name="Weber T.G."/>
            <person name="Yates J.R. III"/>
            <person name="Fredrick K."/>
            <person name="Schimmel P."/>
            <person name="Ackerman S.L."/>
        </authorList>
    </citation>
    <scope>FUNCTION</scope>
    <scope>INTERACTION WITH ANKRD16</scope>
</reference>
<reference key="10">
    <citation type="journal article" date="2020" name="J. Biol. Chem.">
        <title>Methyltransferase-like 21C (METTL21C) methylates alanine tRNA synthetase at Lys-943 in muscle tissue.</title>
        <authorList>
            <person name="Zoabi M."/>
            <person name="Zhang L."/>
            <person name="Li T.M."/>
            <person name="Elias J.E."/>
            <person name="Carlson S.M."/>
            <person name="Gozani O."/>
        </authorList>
    </citation>
    <scope>METHYLATION AT LYS-943</scope>
</reference>
<evidence type="ECO:0000250" key="1">
    <source>
        <dbReference type="UniProtKB" id="P49588"/>
    </source>
</evidence>
<evidence type="ECO:0000255" key="2">
    <source>
        <dbReference type="HAMAP-Rule" id="MF_03133"/>
    </source>
</evidence>
<evidence type="ECO:0000269" key="3">
    <source>
    </source>
</evidence>
<evidence type="ECO:0000269" key="4">
    <source>
    </source>
</evidence>
<evidence type="ECO:0000269" key="5">
    <source>
    </source>
</evidence>
<evidence type="ECO:0000269" key="6">
    <source>
    </source>
</evidence>
<evidence type="ECO:0000269" key="7">
    <source>
    </source>
</evidence>
<evidence type="ECO:0000269" key="8">
    <source>
    </source>
</evidence>
<evidence type="ECO:0000269" key="9">
    <source>
    </source>
</evidence>
<evidence type="ECO:0000303" key="10">
    <source>
    </source>
</evidence>
<evidence type="ECO:0000305" key="11"/>
<evidence type="ECO:0000312" key="12">
    <source>
        <dbReference type="MGI" id="MGI:2384560"/>
    </source>
</evidence>
<gene>
    <name evidence="12" type="primary">Aars1</name>
    <name evidence="12" type="synonym">Aars</name>
</gene>
<keyword id="KW-0007">Acetylation</keyword>
<keyword id="KW-0030">Aminoacyl-tRNA synthetase</keyword>
<keyword id="KW-0067">ATP-binding</keyword>
<keyword id="KW-0963">Cytoplasm</keyword>
<keyword id="KW-0225">Disease variant</keyword>
<keyword id="KW-0436">Ligase</keyword>
<keyword id="KW-0479">Metal-binding</keyword>
<keyword id="KW-0488">Methylation</keyword>
<keyword id="KW-0547">Nucleotide-binding</keyword>
<keyword id="KW-0539">Nucleus</keyword>
<keyword id="KW-0597">Phosphoprotein</keyword>
<keyword id="KW-0648">Protein biosynthesis</keyword>
<keyword id="KW-1185">Reference proteome</keyword>
<keyword id="KW-0694">RNA-binding</keyword>
<keyword id="KW-0820">tRNA-binding</keyword>
<keyword id="KW-0832">Ubl conjugation</keyword>
<keyword id="KW-0862">Zinc</keyword>
<proteinExistence type="evidence at protein level"/>
<feature type="chain" id="PRO_0000075282" description="Alanine--tRNA ligase, cytoplasmic">
    <location>
        <begin position="1"/>
        <end position="968"/>
    </location>
</feature>
<feature type="short sequence motif" description="Nuclear localization signal" evidence="2">
    <location>
        <begin position="750"/>
        <end position="763"/>
    </location>
</feature>
<feature type="binding site" evidence="1">
    <location>
        <position position="77"/>
    </location>
    <ligand>
        <name>ATP</name>
        <dbReference type="ChEBI" id="CHEBI:30616"/>
    </ligand>
</feature>
<feature type="binding site" evidence="1">
    <location>
        <position position="95"/>
    </location>
    <ligand>
        <name>ATP</name>
        <dbReference type="ChEBI" id="CHEBI:30616"/>
    </ligand>
</feature>
<feature type="binding site" evidence="1">
    <location>
        <position position="176"/>
    </location>
    <ligand>
        <name>ATP</name>
        <dbReference type="ChEBI" id="CHEBI:30616"/>
    </ligand>
</feature>
<feature type="binding site" evidence="1">
    <location>
        <begin position="214"/>
        <end position="216"/>
    </location>
    <ligand>
        <name>ATP</name>
        <dbReference type="ChEBI" id="CHEBI:30616"/>
    </ligand>
</feature>
<feature type="binding site" evidence="1">
    <location>
        <position position="216"/>
    </location>
    <ligand>
        <name>L-alanine</name>
        <dbReference type="ChEBI" id="CHEBI:57972"/>
    </ligand>
</feature>
<feature type="binding site" evidence="1">
    <location>
        <position position="239"/>
    </location>
    <ligand>
        <name>L-alanine</name>
        <dbReference type="ChEBI" id="CHEBI:57972"/>
    </ligand>
</feature>
<feature type="binding site" evidence="1">
    <location>
        <position position="243"/>
    </location>
    <ligand>
        <name>ATP</name>
        <dbReference type="ChEBI" id="CHEBI:30616"/>
    </ligand>
</feature>
<feature type="binding site" evidence="2">
    <location>
        <position position="605"/>
    </location>
    <ligand>
        <name>Zn(2+)</name>
        <dbReference type="ChEBI" id="CHEBI:29105"/>
    </ligand>
</feature>
<feature type="binding site" evidence="2">
    <location>
        <position position="609"/>
    </location>
    <ligand>
        <name>Zn(2+)</name>
        <dbReference type="ChEBI" id="CHEBI:29105"/>
    </ligand>
</feature>
<feature type="binding site" evidence="2">
    <location>
        <position position="723"/>
    </location>
    <ligand>
        <name>Zn(2+)</name>
        <dbReference type="ChEBI" id="CHEBI:29105"/>
    </ligand>
</feature>
<feature type="binding site" evidence="2">
    <location>
        <position position="727"/>
    </location>
    <ligand>
        <name>Zn(2+)</name>
        <dbReference type="ChEBI" id="CHEBI:29105"/>
    </ligand>
</feature>
<feature type="modified residue" description="N-acetylmethionine" evidence="1 2">
    <location>
        <position position="1"/>
    </location>
</feature>
<feature type="modified residue" description="Phosphoserine" evidence="1">
    <location>
        <position position="399"/>
    </location>
</feature>
<feature type="modified residue" description="Phosphoserine" evidence="1">
    <location>
        <position position="555"/>
    </location>
</feature>
<feature type="modified residue" description="N6-acetyllysine" evidence="1">
    <location>
        <position position="876"/>
    </location>
</feature>
<feature type="modified residue" description="N6,N6,N6-trimethyllysine; alternate" evidence="9">
    <location>
        <position position="943"/>
    </location>
</feature>
<feature type="modified residue" description="N6,N6-dimethyllysine; alternate" evidence="9">
    <location>
        <position position="943"/>
    </location>
</feature>
<feature type="modified residue" description="N6-methyllysine; alternate" evidence="1">
    <location>
        <position position="943"/>
    </location>
</feature>
<feature type="sequence variant" description="In sti; homozygous mice display an unkempt sticky appearance of fur and show cerebellar Purkinje cell loss and ataxia; defects are caused by impaired ability to edit incorrectly charged tRNA, resulting in formation of ubiquitinated protein aggregates in cerebellar Purkinje cells and degeneration of these neurons." evidence="4">
    <original>A</original>
    <variation>E</variation>
    <location>
        <position position="734"/>
    </location>
</feature>
<feature type="mutagenesis site" description="Decreases misincorporation of Cys instead of Ala." evidence="7">
    <original>A</original>
    <variation>Q</variation>
    <location>
        <position position="448"/>
    </location>
</feature>
<feature type="mutagenesis site" description="Homozygous embryos die at midgestation. Defects are caused by a dramatic increase in production of Ser-mischarged tRNA(Ala)." evidence="6">
    <original>C</original>
    <variation>A</variation>
    <location>
        <position position="723"/>
    </location>
</feature>
<feature type="sequence conflict" description="In Ref. 1; BAC31927." evidence="11" ref="1">
    <original>E</original>
    <variation>D</variation>
    <location>
        <position position="369"/>
    </location>
</feature>
<feature type="sequence conflict" description="In Ref. 1; BAC31927." evidence="11" ref="1">
    <original>A</original>
    <variation>T</variation>
    <location>
        <position position="630"/>
    </location>
</feature>
<comment type="function">
    <text evidence="2 4 5 6 7 8">Catalyzes the attachment of alanine to tRNA(Ala) in a two-step reaction: alanine is first activated by ATP to form Ala-AMP and then transferred to the acceptor end of tRNA(Ala) (PubMed:16906134, PubMed:20010690, PubMed:25422440, PubMed:27622773). Also edits incorrectly charged tRNA(Ala) via its editing domain (PubMed:16906134, PubMed:20010690, PubMed:25422440, PubMed:29769718). In presence of high levels of lactate, also acts as a protein lactyltransferase that mediates lactylation of lysine residues in target proteins, such as TEAD1, TP53/p53 and YAP1. Protein lactylation takes place in a two-step reaction: lactate is first activated by ATP to form lactate-AMP and then transferred to lysine residues of target proteins. Acts as an inhibitor of TP53/p53 activity by catalyzing lactylation of TP53/p53. Acts as a positive regulator of the Hippo pathway by mediating lactylation of TEAD1 and YAP1.</text>
</comment>
<comment type="catalytic activity">
    <reaction evidence="2 7">
        <text>tRNA(Ala) + L-alanine + ATP = L-alanyl-tRNA(Ala) + AMP + diphosphate</text>
        <dbReference type="Rhea" id="RHEA:12540"/>
        <dbReference type="Rhea" id="RHEA-COMP:9657"/>
        <dbReference type="Rhea" id="RHEA-COMP:9923"/>
        <dbReference type="ChEBI" id="CHEBI:30616"/>
        <dbReference type="ChEBI" id="CHEBI:33019"/>
        <dbReference type="ChEBI" id="CHEBI:57972"/>
        <dbReference type="ChEBI" id="CHEBI:78442"/>
        <dbReference type="ChEBI" id="CHEBI:78497"/>
        <dbReference type="ChEBI" id="CHEBI:456215"/>
        <dbReference type="EC" id="6.1.1.7"/>
    </reaction>
</comment>
<comment type="catalytic activity">
    <reaction evidence="2">
        <text>(S)-lactate + ATP + H(+) = (S)-lactoyl-AMP + diphosphate</text>
        <dbReference type="Rhea" id="RHEA:80271"/>
        <dbReference type="ChEBI" id="CHEBI:15378"/>
        <dbReference type="ChEBI" id="CHEBI:16651"/>
        <dbReference type="ChEBI" id="CHEBI:30616"/>
        <dbReference type="ChEBI" id="CHEBI:33019"/>
        <dbReference type="ChEBI" id="CHEBI:231470"/>
    </reaction>
</comment>
<comment type="catalytic activity">
    <reaction evidence="2">
        <text>(S)-lactoyl-AMP + L-lysyl-[protein] = N(6)-[(S)-lactoyl]-L-lysyl-[protein] + AMP + 2 H(+)</text>
        <dbReference type="Rhea" id="RHEA:80275"/>
        <dbReference type="Rhea" id="RHEA-COMP:9752"/>
        <dbReference type="Rhea" id="RHEA-COMP:19466"/>
        <dbReference type="ChEBI" id="CHEBI:15378"/>
        <dbReference type="ChEBI" id="CHEBI:29969"/>
        <dbReference type="ChEBI" id="CHEBI:231470"/>
        <dbReference type="ChEBI" id="CHEBI:231527"/>
        <dbReference type="ChEBI" id="CHEBI:456215"/>
    </reaction>
</comment>
<comment type="cofactor">
    <cofactor evidence="2">
        <name>Zn(2+)</name>
        <dbReference type="ChEBI" id="CHEBI:29105"/>
    </cofactor>
    <text evidence="2">Binds 1 zinc ion per subunit.</text>
</comment>
<comment type="activity regulation">
    <text evidence="1">The protein lactyltransferase activity is inhibited by beta-alanine.</text>
</comment>
<comment type="subunit">
    <text evidence="2 8">Monomer (By similarity). Interacts with ANKRD16; the interaction is direct (PubMed:29769718).</text>
</comment>
<comment type="interaction">
    <interactant intactId="EBI-11566807">
        <id>Q8BGQ7</id>
    </interactant>
    <interactant intactId="EBI-20710644">
        <id>A2AS55-1</id>
        <label>Ankrd16</label>
    </interactant>
    <organismsDiffer>false</organismsDiffer>
    <experiments>6</experiments>
</comment>
<comment type="subcellular location">
    <subcellularLocation>
        <location evidence="2">Cytoplasm</location>
    </subcellularLocation>
    <subcellularLocation>
        <location evidence="2">Nucleus</location>
    </subcellularLocation>
    <text evidence="2">Translocates to the nucleus in response to increased levels of lactate; nuclear translocation is dependent on KPNA4.</text>
</comment>
<comment type="domain">
    <text evidence="2">Consists of three domains; the N-terminal catalytic domain, the editing domain and the C-terminal C-Ala domain. The editing domain removes incorrectly charged amino acids, while the C-Ala domain, along with tRNA(Ala), serves as a bridge to cooperatively bring together the editing and aminoacylation centers thus stimulating deacylation of misacylated tRNAs.</text>
</comment>
<comment type="PTM">
    <text evidence="2 3">ISGylated.</text>
</comment>
<comment type="PTM">
    <text evidence="1">Methylation at 'Lys-943' by METTL21C.</text>
</comment>
<comment type="disease">
    <text evidence="4">In sticky (sti); homozygous mice display an unkempt sticky appearance of fur and show cerebellar Purkinje cell loss and ataxia. Defects are caused by impaired ability to edit incorrectly charged tRNA(Ala), resulting in a two-fold increase in Ser-mischarged tRNA(Ala). This results in formation of ubiquitinated protein aggregates in cerebellar Purkinje cells and degeneration of these neurons.</text>
</comment>
<comment type="miscellaneous">
    <text evidence="10">Was named 'sticky' because of the sticky characteristics of the fur in mice homozygous for the Glu-734 variant.</text>
</comment>
<comment type="similarity">
    <text evidence="2">Belongs to the class-II aminoacyl-tRNA synthetase family.</text>
</comment>
<name>SYAC_MOUSE</name>
<accession>Q8BGQ7</accession>
<accession>Q8BXR0</accession>